<organism>
    <name type="scientific">Thermoplasma acidophilum (strain ATCC 25905 / DSM 1728 / JCM 9062 / NBRC 15155 / AMRC-C165)</name>
    <dbReference type="NCBI Taxonomy" id="273075"/>
    <lineage>
        <taxon>Archaea</taxon>
        <taxon>Methanobacteriati</taxon>
        <taxon>Thermoplasmatota</taxon>
        <taxon>Thermoplasmata</taxon>
        <taxon>Thermoplasmatales</taxon>
        <taxon>Thermoplasmataceae</taxon>
        <taxon>Thermoplasma</taxon>
    </lineage>
</organism>
<sequence length="119" mass="13949">MSEDDVDNSVKDFESGEENEESIGRVILPNKKKGEMFGIVEKMEGASRLSVMCEDGYTRNARIPGRMRKRMWIREKDLVIVKPWEFQPEKADVVYRYTKTQASYLSRNHMLPEVIDIFK</sequence>
<keyword id="KW-0396">Initiation factor</keyword>
<keyword id="KW-0648">Protein biosynthesis</keyword>
<keyword id="KW-1185">Reference proteome</keyword>
<gene>
    <name type="primary">eIF1A</name>
    <name type="ordered locus">Ta0393.1</name>
</gene>
<evidence type="ECO:0000250" key="1"/>
<evidence type="ECO:0000256" key="2">
    <source>
        <dbReference type="SAM" id="MobiDB-lite"/>
    </source>
</evidence>
<evidence type="ECO:0000305" key="3"/>
<reference key="1">
    <citation type="journal article" date="1992" name="Nucleic Acids Res.">
        <title>Nucleotide sequence of the genes encoding the subunits H, B, A' and A'' of the DNA-dependent RNA polymerase and the initiator tRNA from Thermoplasma acidophilum.</title>
        <authorList>
            <person name="Klenk H.-P."/>
            <person name="Renner O."/>
            <person name="Schwass V."/>
            <person name="Zillig W."/>
        </authorList>
    </citation>
    <scope>NUCLEOTIDE SEQUENCE [GENOMIC DNA]</scope>
    <source>
        <strain>ATCC 25905 / DSM 1728 / JCM 9062 / NBRC 15155 / AMRC-C165</strain>
    </source>
</reference>
<reference key="2">
    <citation type="journal article" date="2000" name="Nature">
        <title>The genome sequence of the thermoacidophilic scavenger Thermoplasma acidophilum.</title>
        <authorList>
            <person name="Ruepp A."/>
            <person name="Graml W."/>
            <person name="Santos-Martinez M.-L."/>
            <person name="Koretke K.K."/>
            <person name="Volker C."/>
            <person name="Mewes H.-W."/>
            <person name="Frishman D."/>
            <person name="Stocker S."/>
            <person name="Lupas A.N."/>
            <person name="Baumeister W."/>
        </authorList>
    </citation>
    <scope>NUCLEOTIDE SEQUENCE [LARGE SCALE GENOMIC DNA]</scope>
    <source>
        <strain>ATCC 25905 / DSM 1728 / JCM 9062 / NBRC 15155 / AMRC-C165</strain>
    </source>
</reference>
<protein>
    <recommendedName>
        <fullName>Translation initiation factor 1A</fullName>
        <shortName>aIF-1A</shortName>
    </recommendedName>
</protein>
<feature type="chain" id="PRO_0000145136" description="Translation initiation factor 1A">
    <location>
        <begin position="1"/>
        <end position="119"/>
    </location>
</feature>
<feature type="domain" description="S1-like">
    <location>
        <begin position="24"/>
        <end position="98"/>
    </location>
</feature>
<feature type="region of interest" description="Disordered" evidence="2">
    <location>
        <begin position="1"/>
        <end position="24"/>
    </location>
</feature>
<feature type="sequence conflict" description="In Ref. 1; CAA48284." evidence="3" ref="1">
    <original>Y</original>
    <variation>N</variation>
    <location>
        <position position="97"/>
    </location>
</feature>
<feature type="sequence conflict" description="In Ref. 1; CAA48284." evidence="3" ref="1">
    <original>FK</original>
    <variation>SNEVMKDR</variation>
    <location>
        <begin position="118"/>
        <end position="119"/>
    </location>
</feature>
<dbReference type="EMBL" id="X68198">
    <property type="protein sequence ID" value="CAA48284.1"/>
    <property type="molecule type" value="Genomic_DNA"/>
</dbReference>
<dbReference type="EMBL" id="AL445064">
    <property type="status" value="NOT_ANNOTATED_CDS"/>
    <property type="molecule type" value="Genomic_DNA"/>
</dbReference>
<dbReference type="PIR" id="S26726">
    <property type="entry name" value="S26726"/>
</dbReference>
<dbReference type="RefSeq" id="WP_010900823.1">
    <property type="nucleotide sequence ID" value="NC_002578.1"/>
</dbReference>
<dbReference type="SMR" id="Q03590"/>
<dbReference type="FunCoup" id="Q03590">
    <property type="interactions" value="166"/>
</dbReference>
<dbReference type="PaxDb" id="273075-Ta0394a"/>
<dbReference type="eggNOG" id="arCOG01179">
    <property type="taxonomic scope" value="Archaea"/>
</dbReference>
<dbReference type="InParanoid" id="Q03590"/>
<dbReference type="OrthoDB" id="2586at2157"/>
<dbReference type="Proteomes" id="UP000001024">
    <property type="component" value="Chromosome"/>
</dbReference>
<dbReference type="GO" id="GO:0003723">
    <property type="term" value="F:RNA binding"/>
    <property type="evidence" value="ECO:0007669"/>
    <property type="project" value="InterPro"/>
</dbReference>
<dbReference type="GO" id="GO:0003743">
    <property type="term" value="F:translation initiation factor activity"/>
    <property type="evidence" value="ECO:0007669"/>
    <property type="project" value="UniProtKB-UniRule"/>
</dbReference>
<dbReference type="CDD" id="cd05793">
    <property type="entry name" value="S1_IF1A"/>
    <property type="match status" value="1"/>
</dbReference>
<dbReference type="Gene3D" id="2.40.50.140">
    <property type="entry name" value="Nucleic acid-binding proteins"/>
    <property type="match status" value="1"/>
</dbReference>
<dbReference type="HAMAP" id="MF_00216">
    <property type="entry name" value="aIF_1A"/>
    <property type="match status" value="1"/>
</dbReference>
<dbReference type="InterPro" id="IPR012340">
    <property type="entry name" value="NA-bd_OB-fold"/>
</dbReference>
<dbReference type="InterPro" id="IPR006196">
    <property type="entry name" value="RNA-binding_domain_S1_IF1"/>
</dbReference>
<dbReference type="InterPro" id="IPR001253">
    <property type="entry name" value="TIF_eIF-1A"/>
</dbReference>
<dbReference type="InterPro" id="IPR018104">
    <property type="entry name" value="TIF_eIF-1A_CS"/>
</dbReference>
<dbReference type="NCBIfam" id="TIGR00523">
    <property type="entry name" value="eIF-1A"/>
    <property type="match status" value="1"/>
</dbReference>
<dbReference type="NCBIfam" id="NF003084">
    <property type="entry name" value="PRK04012.1-3"/>
    <property type="match status" value="1"/>
</dbReference>
<dbReference type="NCBIfam" id="NF003085">
    <property type="entry name" value="PRK04012.1-5"/>
    <property type="match status" value="1"/>
</dbReference>
<dbReference type="PANTHER" id="PTHR21668">
    <property type="entry name" value="EIF-1A"/>
    <property type="match status" value="1"/>
</dbReference>
<dbReference type="Pfam" id="PF01176">
    <property type="entry name" value="eIF-1a"/>
    <property type="match status" value="1"/>
</dbReference>
<dbReference type="SMART" id="SM00652">
    <property type="entry name" value="eIF1a"/>
    <property type="match status" value="1"/>
</dbReference>
<dbReference type="SUPFAM" id="SSF50249">
    <property type="entry name" value="Nucleic acid-binding proteins"/>
    <property type="match status" value="1"/>
</dbReference>
<dbReference type="PROSITE" id="PS01262">
    <property type="entry name" value="IF1A"/>
    <property type="match status" value="1"/>
</dbReference>
<dbReference type="PROSITE" id="PS50832">
    <property type="entry name" value="S1_IF1_TYPE"/>
    <property type="match status" value="1"/>
</dbReference>
<proteinExistence type="inferred from homology"/>
<comment type="function">
    <text evidence="1">Seems to be required for maximal rate of protein biosynthesis. Enhances ribosome dissociation into subunits and stabilizes the binding of the initiator Met-tRNA(I) to 40 S ribosomal subunits (By similarity).</text>
</comment>
<comment type="similarity">
    <text evidence="3">Belongs to the eIF-1A family.</text>
</comment>
<name>IF1A_THEAC</name>
<accession>Q03590</accession>